<organism>
    <name type="scientific">Pseudomonas entomophila (strain L48)</name>
    <dbReference type="NCBI Taxonomy" id="384676"/>
    <lineage>
        <taxon>Bacteria</taxon>
        <taxon>Pseudomonadati</taxon>
        <taxon>Pseudomonadota</taxon>
        <taxon>Gammaproteobacteria</taxon>
        <taxon>Pseudomonadales</taxon>
        <taxon>Pseudomonadaceae</taxon>
        <taxon>Pseudomonas</taxon>
    </lineage>
</organism>
<comment type="function">
    <text evidence="1">Binds the lower part of the 30S subunit head. Binds mRNA in the 70S ribosome, positioning it for translation.</text>
</comment>
<comment type="subunit">
    <text evidence="1">Part of the 30S ribosomal subunit. Forms a tight complex with proteins S10 and S14.</text>
</comment>
<comment type="similarity">
    <text evidence="1">Belongs to the universal ribosomal protein uS3 family.</text>
</comment>
<protein>
    <recommendedName>
        <fullName evidence="1">Small ribosomal subunit protein uS3</fullName>
    </recommendedName>
    <alternativeName>
        <fullName evidence="2">30S ribosomal protein S3</fullName>
    </alternativeName>
</protein>
<gene>
    <name evidence="1" type="primary">rpsC</name>
    <name type="ordered locus">PSEEN0496</name>
</gene>
<name>RS3_PSEE4</name>
<reference key="1">
    <citation type="journal article" date="2006" name="Nat. Biotechnol.">
        <title>Complete genome sequence of the entomopathogenic and metabolically versatile soil bacterium Pseudomonas entomophila.</title>
        <authorList>
            <person name="Vodovar N."/>
            <person name="Vallenet D."/>
            <person name="Cruveiller S."/>
            <person name="Rouy Z."/>
            <person name="Barbe V."/>
            <person name="Acosta C."/>
            <person name="Cattolico L."/>
            <person name="Jubin C."/>
            <person name="Lajus A."/>
            <person name="Segurens B."/>
            <person name="Vacherie B."/>
            <person name="Wincker P."/>
            <person name="Weissenbach J."/>
            <person name="Lemaitre B."/>
            <person name="Medigue C."/>
            <person name="Boccard F."/>
        </authorList>
    </citation>
    <scope>NUCLEOTIDE SEQUENCE [LARGE SCALE GENOMIC DNA]</scope>
    <source>
        <strain>L48</strain>
    </source>
</reference>
<proteinExistence type="inferred from homology"/>
<evidence type="ECO:0000255" key="1">
    <source>
        <dbReference type="HAMAP-Rule" id="MF_01309"/>
    </source>
</evidence>
<evidence type="ECO:0000305" key="2"/>
<keyword id="KW-0687">Ribonucleoprotein</keyword>
<keyword id="KW-0689">Ribosomal protein</keyword>
<keyword id="KW-0694">RNA-binding</keyword>
<keyword id="KW-0699">rRNA-binding</keyword>
<sequence>MGQKVHPTGIRLGIVKEHTSVWYADGATYADYLLKDLQTREYLQDKLKSASVSRIDIHRPAQTARITIHTARPGIVIGKKGEDVEKLRQDLTKQMGVPVHINIEEIRKPELDAMLVAQSVAQQLERRVMFRRAMKRAVQNAMRIGAKGIKIQVSGRLGGAEIARTEWYREGRVPLHTLRADIDYNTYEAHTTYGVIGVKVWIFKGEVIGGRQEELKPQAPAPRKKAAK</sequence>
<feature type="chain" id="PRO_0000293857" description="Small ribosomal subunit protein uS3">
    <location>
        <begin position="1"/>
        <end position="228"/>
    </location>
</feature>
<feature type="domain" description="KH type-2" evidence="1">
    <location>
        <begin position="39"/>
        <end position="107"/>
    </location>
</feature>
<accession>Q1IFW0</accession>
<dbReference type="EMBL" id="CT573326">
    <property type="protein sequence ID" value="CAK13442.1"/>
    <property type="molecule type" value="Genomic_DNA"/>
</dbReference>
<dbReference type="RefSeq" id="WP_011531889.1">
    <property type="nucleotide sequence ID" value="NC_008027.1"/>
</dbReference>
<dbReference type="SMR" id="Q1IFW0"/>
<dbReference type="STRING" id="384676.PSEEN0496"/>
<dbReference type="GeneID" id="93675528"/>
<dbReference type="KEGG" id="pen:PSEEN0496"/>
<dbReference type="eggNOG" id="COG0092">
    <property type="taxonomic scope" value="Bacteria"/>
</dbReference>
<dbReference type="HOGENOM" id="CLU_058591_0_2_6"/>
<dbReference type="OrthoDB" id="9806396at2"/>
<dbReference type="Proteomes" id="UP000000658">
    <property type="component" value="Chromosome"/>
</dbReference>
<dbReference type="GO" id="GO:0022627">
    <property type="term" value="C:cytosolic small ribosomal subunit"/>
    <property type="evidence" value="ECO:0007669"/>
    <property type="project" value="TreeGrafter"/>
</dbReference>
<dbReference type="GO" id="GO:0003729">
    <property type="term" value="F:mRNA binding"/>
    <property type="evidence" value="ECO:0007669"/>
    <property type="project" value="UniProtKB-UniRule"/>
</dbReference>
<dbReference type="GO" id="GO:0019843">
    <property type="term" value="F:rRNA binding"/>
    <property type="evidence" value="ECO:0007669"/>
    <property type="project" value="UniProtKB-UniRule"/>
</dbReference>
<dbReference type="GO" id="GO:0003735">
    <property type="term" value="F:structural constituent of ribosome"/>
    <property type="evidence" value="ECO:0007669"/>
    <property type="project" value="InterPro"/>
</dbReference>
<dbReference type="GO" id="GO:0006412">
    <property type="term" value="P:translation"/>
    <property type="evidence" value="ECO:0007669"/>
    <property type="project" value="UniProtKB-UniRule"/>
</dbReference>
<dbReference type="CDD" id="cd02412">
    <property type="entry name" value="KH-II_30S_S3"/>
    <property type="match status" value="1"/>
</dbReference>
<dbReference type="FunFam" id="3.30.1140.32:FF:000001">
    <property type="entry name" value="30S ribosomal protein S3"/>
    <property type="match status" value="1"/>
</dbReference>
<dbReference type="FunFam" id="3.30.300.20:FF:000001">
    <property type="entry name" value="30S ribosomal protein S3"/>
    <property type="match status" value="1"/>
</dbReference>
<dbReference type="Gene3D" id="3.30.300.20">
    <property type="match status" value="1"/>
</dbReference>
<dbReference type="Gene3D" id="3.30.1140.32">
    <property type="entry name" value="Ribosomal protein S3, C-terminal domain"/>
    <property type="match status" value="1"/>
</dbReference>
<dbReference type="HAMAP" id="MF_01309_B">
    <property type="entry name" value="Ribosomal_uS3_B"/>
    <property type="match status" value="1"/>
</dbReference>
<dbReference type="InterPro" id="IPR004087">
    <property type="entry name" value="KH_dom"/>
</dbReference>
<dbReference type="InterPro" id="IPR015946">
    <property type="entry name" value="KH_dom-like_a/b"/>
</dbReference>
<dbReference type="InterPro" id="IPR004044">
    <property type="entry name" value="KH_dom_type_2"/>
</dbReference>
<dbReference type="InterPro" id="IPR009019">
    <property type="entry name" value="KH_sf_prok-type"/>
</dbReference>
<dbReference type="InterPro" id="IPR036419">
    <property type="entry name" value="Ribosomal_S3_C_sf"/>
</dbReference>
<dbReference type="InterPro" id="IPR005704">
    <property type="entry name" value="Ribosomal_uS3_bac-typ"/>
</dbReference>
<dbReference type="InterPro" id="IPR001351">
    <property type="entry name" value="Ribosomal_uS3_C"/>
</dbReference>
<dbReference type="InterPro" id="IPR018280">
    <property type="entry name" value="Ribosomal_uS3_CS"/>
</dbReference>
<dbReference type="NCBIfam" id="TIGR01009">
    <property type="entry name" value="rpsC_bact"/>
    <property type="match status" value="1"/>
</dbReference>
<dbReference type="PANTHER" id="PTHR11760">
    <property type="entry name" value="30S/40S RIBOSOMAL PROTEIN S3"/>
    <property type="match status" value="1"/>
</dbReference>
<dbReference type="PANTHER" id="PTHR11760:SF19">
    <property type="entry name" value="SMALL RIBOSOMAL SUBUNIT PROTEIN US3C"/>
    <property type="match status" value="1"/>
</dbReference>
<dbReference type="Pfam" id="PF07650">
    <property type="entry name" value="KH_2"/>
    <property type="match status" value="1"/>
</dbReference>
<dbReference type="Pfam" id="PF00189">
    <property type="entry name" value="Ribosomal_S3_C"/>
    <property type="match status" value="1"/>
</dbReference>
<dbReference type="SMART" id="SM00322">
    <property type="entry name" value="KH"/>
    <property type="match status" value="1"/>
</dbReference>
<dbReference type="SUPFAM" id="SSF54814">
    <property type="entry name" value="Prokaryotic type KH domain (KH-domain type II)"/>
    <property type="match status" value="1"/>
</dbReference>
<dbReference type="SUPFAM" id="SSF54821">
    <property type="entry name" value="Ribosomal protein S3 C-terminal domain"/>
    <property type="match status" value="1"/>
</dbReference>
<dbReference type="PROSITE" id="PS50823">
    <property type="entry name" value="KH_TYPE_2"/>
    <property type="match status" value="1"/>
</dbReference>
<dbReference type="PROSITE" id="PS00548">
    <property type="entry name" value="RIBOSOMAL_S3"/>
    <property type="match status" value="1"/>
</dbReference>